<comment type="function">
    <text evidence="1">Catalyzes the reversible formation of acyl-phosphate (acyl-PO(4)) from acyl-[acyl-carrier-protein] (acyl-ACP). This enzyme utilizes acyl-ACP as fatty acyl donor, but not acyl-CoA.</text>
</comment>
<comment type="catalytic activity">
    <reaction evidence="1">
        <text>a fatty acyl-[ACP] + phosphate = an acyl phosphate + holo-[ACP]</text>
        <dbReference type="Rhea" id="RHEA:42292"/>
        <dbReference type="Rhea" id="RHEA-COMP:9685"/>
        <dbReference type="Rhea" id="RHEA-COMP:14125"/>
        <dbReference type="ChEBI" id="CHEBI:43474"/>
        <dbReference type="ChEBI" id="CHEBI:59918"/>
        <dbReference type="ChEBI" id="CHEBI:64479"/>
        <dbReference type="ChEBI" id="CHEBI:138651"/>
        <dbReference type="EC" id="2.3.1.274"/>
    </reaction>
</comment>
<comment type="pathway">
    <text evidence="1">Lipid metabolism; phospholipid metabolism.</text>
</comment>
<comment type="subunit">
    <text evidence="1">Homodimer. Probably interacts with PlsY.</text>
</comment>
<comment type="subcellular location">
    <subcellularLocation>
        <location evidence="1">Cytoplasm</location>
    </subcellularLocation>
    <text evidence="1">Associated with the membrane possibly through PlsY.</text>
</comment>
<comment type="similarity">
    <text evidence="1">Belongs to the PlsX family.</text>
</comment>
<protein>
    <recommendedName>
        <fullName evidence="1">Phosphate acyltransferase</fullName>
        <ecNumber evidence="1">2.3.1.274</ecNumber>
    </recommendedName>
    <alternativeName>
        <fullName evidence="1">Acyl-ACP phosphotransacylase</fullName>
    </alternativeName>
    <alternativeName>
        <fullName evidence="1">Acyl-[acyl-carrier-protein]--phosphate acyltransferase</fullName>
    </alternativeName>
    <alternativeName>
        <fullName evidence="1">Phosphate-acyl-ACP acyltransferase</fullName>
    </alternativeName>
</protein>
<accession>Q982Z9</accession>
<evidence type="ECO:0000255" key="1">
    <source>
        <dbReference type="HAMAP-Rule" id="MF_00019"/>
    </source>
</evidence>
<organism>
    <name type="scientific">Mesorhizobium japonicum (strain LMG 29417 / CECT 9101 / MAFF 303099)</name>
    <name type="common">Mesorhizobium loti (strain MAFF 303099)</name>
    <dbReference type="NCBI Taxonomy" id="266835"/>
    <lineage>
        <taxon>Bacteria</taxon>
        <taxon>Pseudomonadati</taxon>
        <taxon>Pseudomonadota</taxon>
        <taxon>Alphaproteobacteria</taxon>
        <taxon>Hyphomicrobiales</taxon>
        <taxon>Phyllobacteriaceae</taxon>
        <taxon>Mesorhizobium</taxon>
    </lineage>
</organism>
<name>PLSX_RHILO</name>
<keyword id="KW-0963">Cytoplasm</keyword>
<keyword id="KW-0444">Lipid biosynthesis</keyword>
<keyword id="KW-0443">Lipid metabolism</keyword>
<keyword id="KW-0594">Phospholipid biosynthesis</keyword>
<keyword id="KW-1208">Phospholipid metabolism</keyword>
<keyword id="KW-0808">Transferase</keyword>
<reference key="1">
    <citation type="journal article" date="2000" name="DNA Res.">
        <title>Complete genome structure of the nitrogen-fixing symbiotic bacterium Mesorhizobium loti.</title>
        <authorList>
            <person name="Kaneko T."/>
            <person name="Nakamura Y."/>
            <person name="Sato S."/>
            <person name="Asamizu E."/>
            <person name="Kato T."/>
            <person name="Sasamoto S."/>
            <person name="Watanabe A."/>
            <person name="Idesawa K."/>
            <person name="Ishikawa A."/>
            <person name="Kawashima K."/>
            <person name="Kimura T."/>
            <person name="Kishida Y."/>
            <person name="Kiyokawa C."/>
            <person name="Kohara M."/>
            <person name="Matsumoto M."/>
            <person name="Matsuno A."/>
            <person name="Mochizuki Y."/>
            <person name="Nakayama S."/>
            <person name="Nakazaki N."/>
            <person name="Shimpo S."/>
            <person name="Sugimoto M."/>
            <person name="Takeuchi C."/>
            <person name="Yamada M."/>
            <person name="Tabata S."/>
        </authorList>
    </citation>
    <scope>NUCLEOTIDE SEQUENCE [LARGE SCALE GENOMIC DNA]</scope>
    <source>
        <strain>LMG 29417 / CECT 9101 / MAFF 303099</strain>
    </source>
</reference>
<feature type="chain" id="PRO_0000189926" description="Phosphate acyltransferase">
    <location>
        <begin position="1"/>
        <end position="356"/>
    </location>
</feature>
<gene>
    <name evidence="1" type="primary">plsX</name>
    <name type="ordered locus">mlr8423</name>
</gene>
<sequence length="356" mass="38252">MIRISIDAMGGDHGPAVVIPALMTVATRRPDIRFVIYGREELVRPELAKFPKLAEVSEFFHCEIAVRMDDKPSQALRHGRWKSSMWKAVEAVKSGAADACISAGNTGALMAMSKFCLRTMATIDRPAIAALWPTLRGESVVLDVGATIGADAHQLIDFAILGTGMARSVFGVARPTVGLLNVGVEEIKGQEEVKEAGRMLREANMASMNYHGFVEGDDIGKGTVDVVVTEGFAGNIALKTAEGTARQIAGYLRAAMSRTLMAKIGYVFAKSAFDRLREKMDVGRSNGGVFLGLNGIVVKSHGGADSDGFAAAIELGYDMVRNNLLDRIEADLDLFHARNPHALSSRKSDVVTDAKE</sequence>
<dbReference type="EC" id="2.3.1.274" evidence="1"/>
<dbReference type="EMBL" id="BA000012">
    <property type="protein sequence ID" value="BAB54307.1"/>
    <property type="molecule type" value="Genomic_DNA"/>
</dbReference>
<dbReference type="RefSeq" id="WP_010915607.1">
    <property type="nucleotide sequence ID" value="NC_002678.2"/>
</dbReference>
<dbReference type="SMR" id="Q982Z9"/>
<dbReference type="KEGG" id="mlo:mlr8423"/>
<dbReference type="PATRIC" id="fig|266835.9.peg.6736"/>
<dbReference type="eggNOG" id="COG0416">
    <property type="taxonomic scope" value="Bacteria"/>
</dbReference>
<dbReference type="HOGENOM" id="CLU_039379_1_0_5"/>
<dbReference type="UniPathway" id="UPA00085"/>
<dbReference type="Proteomes" id="UP000000552">
    <property type="component" value="Chromosome"/>
</dbReference>
<dbReference type="GO" id="GO:0005737">
    <property type="term" value="C:cytoplasm"/>
    <property type="evidence" value="ECO:0007669"/>
    <property type="project" value="UniProtKB-SubCell"/>
</dbReference>
<dbReference type="GO" id="GO:0043811">
    <property type="term" value="F:phosphate:acyl-[acyl carrier protein] acyltransferase activity"/>
    <property type="evidence" value="ECO:0007669"/>
    <property type="project" value="UniProtKB-UniRule"/>
</dbReference>
<dbReference type="GO" id="GO:0006633">
    <property type="term" value="P:fatty acid biosynthetic process"/>
    <property type="evidence" value="ECO:0007669"/>
    <property type="project" value="UniProtKB-UniRule"/>
</dbReference>
<dbReference type="GO" id="GO:0008654">
    <property type="term" value="P:phospholipid biosynthetic process"/>
    <property type="evidence" value="ECO:0007669"/>
    <property type="project" value="UniProtKB-KW"/>
</dbReference>
<dbReference type="Gene3D" id="3.40.718.10">
    <property type="entry name" value="Isopropylmalate Dehydrogenase"/>
    <property type="match status" value="1"/>
</dbReference>
<dbReference type="HAMAP" id="MF_00019">
    <property type="entry name" value="PlsX"/>
    <property type="match status" value="1"/>
</dbReference>
<dbReference type="InterPro" id="IPR003664">
    <property type="entry name" value="FA_synthesis"/>
</dbReference>
<dbReference type="InterPro" id="IPR012281">
    <property type="entry name" value="Phospholipid_synth_PlsX-like"/>
</dbReference>
<dbReference type="NCBIfam" id="TIGR00182">
    <property type="entry name" value="plsX"/>
    <property type="match status" value="1"/>
</dbReference>
<dbReference type="PANTHER" id="PTHR30100">
    <property type="entry name" value="FATTY ACID/PHOSPHOLIPID SYNTHESIS PROTEIN PLSX"/>
    <property type="match status" value="1"/>
</dbReference>
<dbReference type="PANTHER" id="PTHR30100:SF1">
    <property type="entry name" value="PHOSPHATE ACYLTRANSFERASE"/>
    <property type="match status" value="1"/>
</dbReference>
<dbReference type="Pfam" id="PF02504">
    <property type="entry name" value="FA_synthesis"/>
    <property type="match status" value="1"/>
</dbReference>
<dbReference type="PIRSF" id="PIRSF002465">
    <property type="entry name" value="Phsphlp_syn_PlsX"/>
    <property type="match status" value="1"/>
</dbReference>
<dbReference type="SUPFAM" id="SSF53659">
    <property type="entry name" value="Isocitrate/Isopropylmalate dehydrogenase-like"/>
    <property type="match status" value="1"/>
</dbReference>
<proteinExistence type="inferred from homology"/>